<accession>Q5FW25</accession>
<protein>
    <recommendedName>
        <fullName>ADP-ribosylation factor-like protein 2-binding protein</fullName>
        <shortName>ARF-like 2-binding protein</shortName>
    </recommendedName>
</protein>
<name>AR2BP_XENTR</name>
<comment type="function">
    <text evidence="1">Plays a role as an effector of the ADP-ribosylation factor-like protein 2, ARL2.</text>
</comment>
<comment type="subcellular location">
    <subcellularLocation>
        <location evidence="1">Cytoplasm</location>
    </subcellularLocation>
    <subcellularLocation>
        <location evidence="1">Mitochondrion intermembrane space</location>
    </subcellularLocation>
    <subcellularLocation>
        <location evidence="1">Cytoplasm</location>
        <location evidence="1">Cytoskeleton</location>
        <location evidence="1">Microtubule organizing center</location>
        <location evidence="1">Centrosome</location>
    </subcellularLocation>
    <subcellularLocation>
        <location evidence="1">Nucleus</location>
    </subcellularLocation>
    <subcellularLocation>
        <location evidence="1">Cytoplasm</location>
        <location evidence="1">Cytoskeleton</location>
        <location evidence="1">Spindle</location>
    </subcellularLocation>
    <subcellularLocation>
        <location evidence="1">Cytoplasm</location>
        <location evidence="1">Cytoskeleton</location>
        <location evidence="1">Cilium basal body</location>
    </subcellularLocation>
    <text evidence="1">Detected in the midbody matrix. Not detected in the Golgi, nucleus and on the mitotic spindle. Centrosome-associated throughout the cell cycle. Not detected to interphase microtubules. The complex formed with ARL2BP, ARL2 and SLC25A4 is expressed in mitochondria (By similarity).</text>
</comment>
<comment type="similarity">
    <text evidence="2">Belongs to the ARL2BP family.</text>
</comment>
<dbReference type="EMBL" id="CR762122">
    <property type="protein sequence ID" value="CAJ81899.1"/>
    <property type="molecule type" value="mRNA"/>
</dbReference>
<dbReference type="EMBL" id="BC089656">
    <property type="protein sequence ID" value="AAH89656.1"/>
    <property type="molecule type" value="mRNA"/>
</dbReference>
<dbReference type="EMBL" id="BC121547">
    <property type="protein sequence ID" value="AAI21548.1"/>
    <property type="molecule type" value="mRNA"/>
</dbReference>
<dbReference type="RefSeq" id="NP_001017020.1">
    <property type="nucleotide sequence ID" value="NM_001017020.2"/>
</dbReference>
<dbReference type="RefSeq" id="XP_012816619.1">
    <property type="nucleotide sequence ID" value="XM_012961165.3"/>
</dbReference>
<dbReference type="RefSeq" id="XP_012816620.1">
    <property type="nucleotide sequence ID" value="XM_012961166.3"/>
</dbReference>
<dbReference type="RefSeq" id="XP_031755970.1">
    <property type="nucleotide sequence ID" value="XM_031900110.1"/>
</dbReference>
<dbReference type="SMR" id="Q5FW25"/>
<dbReference type="FunCoup" id="Q5FW25">
    <property type="interactions" value="1979"/>
</dbReference>
<dbReference type="STRING" id="8364.ENSXETP00000049249"/>
<dbReference type="PaxDb" id="8364-ENSXETP00000039869"/>
<dbReference type="GeneID" id="549774"/>
<dbReference type="KEGG" id="xtr:549774"/>
<dbReference type="AGR" id="Xenbase:XB-GENE-943387"/>
<dbReference type="CTD" id="23568"/>
<dbReference type="Xenbase" id="XB-GENE-943387">
    <property type="gene designation" value="arl2bp"/>
</dbReference>
<dbReference type="eggNOG" id="ENOG502RYJD">
    <property type="taxonomic scope" value="Eukaryota"/>
</dbReference>
<dbReference type="HOGENOM" id="CLU_116781_0_0_1"/>
<dbReference type="InParanoid" id="Q5FW25"/>
<dbReference type="OMA" id="CILEIIM"/>
<dbReference type="OrthoDB" id="302784at2759"/>
<dbReference type="PhylomeDB" id="Q5FW25"/>
<dbReference type="TreeFam" id="TF315143"/>
<dbReference type="Reactome" id="R-XTR-83936">
    <property type="pathway name" value="Transport of nucleosides and free purine and pyrimidine bases across the plasma membrane"/>
</dbReference>
<dbReference type="Proteomes" id="UP000008143">
    <property type="component" value="Chromosome 4"/>
</dbReference>
<dbReference type="Bgee" id="ENSXETG00000018410">
    <property type="expression patterns" value="Expressed in egg cell and 23 other cell types or tissues"/>
</dbReference>
<dbReference type="GO" id="GO:0005813">
    <property type="term" value="C:centrosome"/>
    <property type="evidence" value="ECO:0007669"/>
    <property type="project" value="UniProtKB-SubCell"/>
</dbReference>
<dbReference type="GO" id="GO:0005929">
    <property type="term" value="C:cilium"/>
    <property type="evidence" value="ECO:0007669"/>
    <property type="project" value="UniProtKB-KW"/>
</dbReference>
<dbReference type="GO" id="GO:0005758">
    <property type="term" value="C:mitochondrial intermembrane space"/>
    <property type="evidence" value="ECO:0007669"/>
    <property type="project" value="UniProtKB-SubCell"/>
</dbReference>
<dbReference type="GO" id="GO:0005634">
    <property type="term" value="C:nucleus"/>
    <property type="evidence" value="ECO:0007669"/>
    <property type="project" value="UniProtKB-SubCell"/>
</dbReference>
<dbReference type="GO" id="GO:0005819">
    <property type="term" value="C:spindle"/>
    <property type="evidence" value="ECO:0007669"/>
    <property type="project" value="UniProtKB-SubCell"/>
</dbReference>
<dbReference type="Gene3D" id="1.20.1520.10">
    <property type="entry name" value="ADP-ribosylation factor-like 2-binding protein, domain"/>
    <property type="match status" value="1"/>
</dbReference>
<dbReference type="InterPro" id="IPR038849">
    <property type="entry name" value="ARL2BP"/>
</dbReference>
<dbReference type="InterPro" id="IPR023379">
    <property type="entry name" value="BART_dom"/>
</dbReference>
<dbReference type="InterPro" id="IPR042541">
    <property type="entry name" value="BART_sf"/>
</dbReference>
<dbReference type="PANTHER" id="PTHR15487">
    <property type="entry name" value="ADP-RIBOSYLATION FACTOR-LIKE PROTEIN 2-BINDING PROTEIN"/>
    <property type="match status" value="1"/>
</dbReference>
<dbReference type="PANTHER" id="PTHR15487:SF4">
    <property type="entry name" value="ADP-RIBOSYLATION FACTOR-LIKE PROTEIN 2-BINDING PROTEIN"/>
    <property type="match status" value="1"/>
</dbReference>
<dbReference type="Pfam" id="PF11527">
    <property type="entry name" value="ARL2_Bind_BART"/>
    <property type="match status" value="1"/>
</dbReference>
<feature type="chain" id="PRO_0000287121" description="ADP-ribosylation factor-like protein 2-binding protein">
    <location>
        <begin position="1"/>
        <end position="157"/>
    </location>
</feature>
<organism>
    <name type="scientific">Xenopus tropicalis</name>
    <name type="common">Western clawed frog</name>
    <name type="synonym">Silurana tropicalis</name>
    <dbReference type="NCBI Taxonomy" id="8364"/>
    <lineage>
        <taxon>Eukaryota</taxon>
        <taxon>Metazoa</taxon>
        <taxon>Chordata</taxon>
        <taxon>Craniata</taxon>
        <taxon>Vertebrata</taxon>
        <taxon>Euteleostomi</taxon>
        <taxon>Amphibia</taxon>
        <taxon>Batrachia</taxon>
        <taxon>Anura</taxon>
        <taxon>Pipoidea</taxon>
        <taxon>Pipidae</taxon>
        <taxon>Xenopodinae</taxon>
        <taxon>Xenopus</taxon>
        <taxon>Silurana</taxon>
    </lineage>
</organism>
<reference key="1">
    <citation type="submission" date="2006-10" db="EMBL/GenBank/DDBJ databases">
        <authorList>
            <consortium name="Sanger Xenopus tropicalis EST/cDNA project"/>
        </authorList>
    </citation>
    <scope>NUCLEOTIDE SEQUENCE [LARGE SCALE MRNA]</scope>
    <source>
        <tissue>Egg</tissue>
    </source>
</reference>
<reference key="2">
    <citation type="submission" date="2005-02" db="EMBL/GenBank/DDBJ databases">
        <authorList>
            <consortium name="NIH - Xenopus Gene Collection (XGC) project"/>
        </authorList>
    </citation>
    <scope>NUCLEOTIDE SEQUENCE [LARGE SCALE MRNA]</scope>
    <source>
        <strain>N6</strain>
        <tissue>Ovary</tissue>
    </source>
</reference>
<sequence length="157" mass="18057">MEDLEEENFTLSVSSPKDAEFDSVVGHMEDIIMDDEFQLLQHGFMDKYYHEFEDTEENKLTYTTIFNEYIGLVEKFIEEQLLLRIPAFNMSAFISSLQCHREEIAGDIFDILLTFTDFLAFKEMFLDYKAEKEGRTVDLSCGLVVTPLIGSSVSSSS</sequence>
<gene>
    <name type="primary">arl2bp</name>
    <name type="ORF">TEgg016g21.1</name>
</gene>
<evidence type="ECO:0000250" key="1"/>
<evidence type="ECO:0000305" key="2"/>
<proteinExistence type="evidence at transcript level"/>
<keyword id="KW-0966">Cell projection</keyword>
<keyword id="KW-0969">Cilium</keyword>
<keyword id="KW-0963">Cytoplasm</keyword>
<keyword id="KW-0206">Cytoskeleton</keyword>
<keyword id="KW-0496">Mitochondrion</keyword>
<keyword id="KW-0539">Nucleus</keyword>
<keyword id="KW-1185">Reference proteome</keyword>